<dbReference type="EC" id="3.1.26.5" evidence="1"/>
<dbReference type="EMBL" id="CP000804">
    <property type="protein sequence ID" value="ABU57519.1"/>
    <property type="molecule type" value="Genomic_DNA"/>
</dbReference>
<dbReference type="RefSeq" id="WP_012119947.1">
    <property type="nucleotide sequence ID" value="NC_009767.1"/>
</dbReference>
<dbReference type="SMR" id="A7NJ53"/>
<dbReference type="STRING" id="383372.Rcas_1424"/>
<dbReference type="KEGG" id="rca:Rcas_1424"/>
<dbReference type="eggNOG" id="COG0594">
    <property type="taxonomic scope" value="Bacteria"/>
</dbReference>
<dbReference type="HOGENOM" id="CLU_117179_9_0_0"/>
<dbReference type="OrthoDB" id="166028at2"/>
<dbReference type="Proteomes" id="UP000000263">
    <property type="component" value="Chromosome"/>
</dbReference>
<dbReference type="GO" id="GO:0030677">
    <property type="term" value="C:ribonuclease P complex"/>
    <property type="evidence" value="ECO:0007669"/>
    <property type="project" value="TreeGrafter"/>
</dbReference>
<dbReference type="GO" id="GO:0042781">
    <property type="term" value="F:3'-tRNA processing endoribonuclease activity"/>
    <property type="evidence" value="ECO:0007669"/>
    <property type="project" value="TreeGrafter"/>
</dbReference>
<dbReference type="GO" id="GO:0004526">
    <property type="term" value="F:ribonuclease P activity"/>
    <property type="evidence" value="ECO:0007669"/>
    <property type="project" value="UniProtKB-UniRule"/>
</dbReference>
<dbReference type="GO" id="GO:0000049">
    <property type="term" value="F:tRNA binding"/>
    <property type="evidence" value="ECO:0007669"/>
    <property type="project" value="UniProtKB-UniRule"/>
</dbReference>
<dbReference type="GO" id="GO:0001682">
    <property type="term" value="P:tRNA 5'-leader removal"/>
    <property type="evidence" value="ECO:0007669"/>
    <property type="project" value="UniProtKB-UniRule"/>
</dbReference>
<dbReference type="Gene3D" id="3.30.230.10">
    <property type="match status" value="1"/>
</dbReference>
<dbReference type="HAMAP" id="MF_00227">
    <property type="entry name" value="RNase_P"/>
    <property type="match status" value="1"/>
</dbReference>
<dbReference type="InterPro" id="IPR020568">
    <property type="entry name" value="Ribosomal_Su5_D2-typ_SF"/>
</dbReference>
<dbReference type="InterPro" id="IPR014721">
    <property type="entry name" value="Ribsml_uS5_D2-typ_fold_subgr"/>
</dbReference>
<dbReference type="InterPro" id="IPR000100">
    <property type="entry name" value="RNase_P"/>
</dbReference>
<dbReference type="InterPro" id="IPR020539">
    <property type="entry name" value="RNase_P_CS"/>
</dbReference>
<dbReference type="NCBIfam" id="TIGR00188">
    <property type="entry name" value="rnpA"/>
    <property type="match status" value="1"/>
</dbReference>
<dbReference type="PANTHER" id="PTHR33992">
    <property type="entry name" value="RIBONUCLEASE P PROTEIN COMPONENT"/>
    <property type="match status" value="1"/>
</dbReference>
<dbReference type="PANTHER" id="PTHR33992:SF1">
    <property type="entry name" value="RIBONUCLEASE P PROTEIN COMPONENT"/>
    <property type="match status" value="1"/>
</dbReference>
<dbReference type="Pfam" id="PF00825">
    <property type="entry name" value="Ribonuclease_P"/>
    <property type="match status" value="1"/>
</dbReference>
<dbReference type="SUPFAM" id="SSF54211">
    <property type="entry name" value="Ribosomal protein S5 domain 2-like"/>
    <property type="match status" value="1"/>
</dbReference>
<dbReference type="PROSITE" id="PS00648">
    <property type="entry name" value="RIBONUCLEASE_P"/>
    <property type="match status" value="1"/>
</dbReference>
<evidence type="ECO:0000255" key="1">
    <source>
        <dbReference type="HAMAP-Rule" id="MF_00227"/>
    </source>
</evidence>
<feature type="chain" id="PRO_1000078204" description="Ribonuclease P protein component">
    <location>
        <begin position="1"/>
        <end position="122"/>
    </location>
</feature>
<name>RNPA_ROSCS</name>
<proteinExistence type="inferred from homology"/>
<protein>
    <recommendedName>
        <fullName evidence="1">Ribonuclease P protein component</fullName>
        <shortName evidence="1">RNase P protein</shortName>
        <shortName evidence="1">RNaseP protein</shortName>
        <ecNumber evidence="1">3.1.26.5</ecNumber>
    </recommendedName>
    <alternativeName>
        <fullName evidence="1">Protein C5</fullName>
    </alternativeName>
</protein>
<comment type="function">
    <text evidence="1">RNaseP catalyzes the removal of the 5'-leader sequence from pre-tRNA to produce the mature 5'-terminus. It can also cleave other RNA substrates such as 4.5S RNA. The protein component plays an auxiliary but essential role in vivo by binding to the 5'-leader sequence and broadening the substrate specificity of the ribozyme.</text>
</comment>
<comment type="catalytic activity">
    <reaction evidence="1">
        <text>Endonucleolytic cleavage of RNA, removing 5'-extranucleotides from tRNA precursor.</text>
        <dbReference type="EC" id="3.1.26.5"/>
    </reaction>
</comment>
<comment type="subunit">
    <text evidence="1">Consists of a catalytic RNA component (M1 or rnpB) and a protein subunit.</text>
</comment>
<comment type="similarity">
    <text evidence="1">Belongs to the RnpA family.</text>
</comment>
<organism>
    <name type="scientific">Roseiflexus castenholzii (strain DSM 13941 / HLO8)</name>
    <dbReference type="NCBI Taxonomy" id="383372"/>
    <lineage>
        <taxon>Bacteria</taxon>
        <taxon>Bacillati</taxon>
        <taxon>Chloroflexota</taxon>
        <taxon>Chloroflexia</taxon>
        <taxon>Chloroflexales</taxon>
        <taxon>Roseiflexineae</taxon>
        <taxon>Roseiflexaceae</taxon>
        <taxon>Roseiflexus</taxon>
    </lineage>
</organism>
<sequence>MKRAYRLRTPEQYQRVRRDGRTWDAGMLMLNAAPNRRRISRCGFIVAKRLGGAVVRNRIRRRVREAVRLLYPQIAPGWDMVFIARSPALAEIAFPQLQALVQRLLQRAGVVQGAVSETPDKD</sequence>
<accession>A7NJ53</accession>
<keyword id="KW-0255">Endonuclease</keyword>
<keyword id="KW-0378">Hydrolase</keyword>
<keyword id="KW-0540">Nuclease</keyword>
<keyword id="KW-1185">Reference proteome</keyword>
<keyword id="KW-0694">RNA-binding</keyword>
<keyword id="KW-0819">tRNA processing</keyword>
<gene>
    <name evidence="1" type="primary">rnpA</name>
    <name type="ordered locus">Rcas_1424</name>
</gene>
<reference key="1">
    <citation type="submission" date="2007-08" db="EMBL/GenBank/DDBJ databases">
        <title>Complete sequence of Roseiflexus castenholzii DSM 13941.</title>
        <authorList>
            <consortium name="US DOE Joint Genome Institute"/>
            <person name="Copeland A."/>
            <person name="Lucas S."/>
            <person name="Lapidus A."/>
            <person name="Barry K."/>
            <person name="Glavina del Rio T."/>
            <person name="Dalin E."/>
            <person name="Tice H."/>
            <person name="Pitluck S."/>
            <person name="Thompson L.S."/>
            <person name="Brettin T."/>
            <person name="Bruce D."/>
            <person name="Detter J.C."/>
            <person name="Han C."/>
            <person name="Tapia R."/>
            <person name="Schmutz J."/>
            <person name="Larimer F."/>
            <person name="Land M."/>
            <person name="Hauser L."/>
            <person name="Kyrpides N."/>
            <person name="Mikhailova N."/>
            <person name="Bryant D.A."/>
            <person name="Hanada S."/>
            <person name="Tsukatani Y."/>
            <person name="Richardson P."/>
        </authorList>
    </citation>
    <scope>NUCLEOTIDE SEQUENCE [LARGE SCALE GENOMIC DNA]</scope>
    <source>
        <strain>DSM 13941 / HLO8</strain>
    </source>
</reference>